<sequence>MLQVYLVRHGETQWNAERRIQGQSDSPLTAKGEQQAMQVATRAKELGITHIISSDLGRTRRTAEIIAQACGCDIIFDSRLRELNMGVLETRNIDSLTEEEENWRRQLVNGTVDGRIPEGESMQELSDRVNAALESCRDLPQGSRPLLVSHGIALGCLVSTILGLPAWAERRLRLRNCSISRVDYQESLWLASGWVVETAGDISHLDAPALDELQR</sequence>
<comment type="catalytic activity">
    <reaction evidence="1">
        <text>(2R)-2-phosphoglycerate = (2R)-3-phosphoglycerate</text>
        <dbReference type="Rhea" id="RHEA:15901"/>
        <dbReference type="ChEBI" id="CHEBI:58272"/>
        <dbReference type="ChEBI" id="CHEBI:58289"/>
    </reaction>
</comment>
<comment type="pathway">
    <text evidence="1">Carbohydrate degradation; glycolysis; pyruvate from D-glyceraldehyde 3-phosphate: step 3/5.</text>
</comment>
<comment type="similarity">
    <text evidence="1">Belongs to the phosphoglycerate mutase family. GpmB subfamily.</text>
</comment>
<evidence type="ECO:0000255" key="1">
    <source>
        <dbReference type="HAMAP-Rule" id="MF_01040"/>
    </source>
</evidence>
<name>GPMB_ECOUT</name>
<dbReference type="EC" id="5.4.2.-" evidence="1"/>
<dbReference type="EMBL" id="CP000243">
    <property type="protein sequence ID" value="ABE10568.1"/>
    <property type="molecule type" value="Genomic_DNA"/>
</dbReference>
<dbReference type="RefSeq" id="WP_000942350.1">
    <property type="nucleotide sequence ID" value="NZ_CP064825.1"/>
</dbReference>
<dbReference type="SMR" id="Q1R246"/>
<dbReference type="KEGG" id="eci:UTI89_C5168"/>
<dbReference type="HOGENOM" id="CLU_033323_9_5_6"/>
<dbReference type="UniPathway" id="UPA00109">
    <property type="reaction ID" value="UER00186"/>
</dbReference>
<dbReference type="Proteomes" id="UP000001952">
    <property type="component" value="Chromosome"/>
</dbReference>
<dbReference type="GO" id="GO:0005737">
    <property type="term" value="C:cytoplasm"/>
    <property type="evidence" value="ECO:0007669"/>
    <property type="project" value="TreeGrafter"/>
</dbReference>
<dbReference type="GO" id="GO:0016791">
    <property type="term" value="F:phosphatase activity"/>
    <property type="evidence" value="ECO:0007669"/>
    <property type="project" value="TreeGrafter"/>
</dbReference>
<dbReference type="GO" id="GO:0004619">
    <property type="term" value="F:phosphoglycerate mutase activity"/>
    <property type="evidence" value="ECO:0007669"/>
    <property type="project" value="UniProtKB-UniRule"/>
</dbReference>
<dbReference type="GO" id="GO:0006096">
    <property type="term" value="P:glycolytic process"/>
    <property type="evidence" value="ECO:0007669"/>
    <property type="project" value="UniProtKB-UniRule"/>
</dbReference>
<dbReference type="CDD" id="cd07067">
    <property type="entry name" value="HP_PGM_like"/>
    <property type="match status" value="1"/>
</dbReference>
<dbReference type="Gene3D" id="3.40.50.1240">
    <property type="entry name" value="Phosphoglycerate mutase-like"/>
    <property type="match status" value="1"/>
</dbReference>
<dbReference type="HAMAP" id="MF_01040">
    <property type="entry name" value="PGAM_GpmB"/>
    <property type="match status" value="1"/>
</dbReference>
<dbReference type="InterPro" id="IPR013078">
    <property type="entry name" value="His_Pase_superF_clade-1"/>
</dbReference>
<dbReference type="InterPro" id="IPR029033">
    <property type="entry name" value="His_PPase_superfam"/>
</dbReference>
<dbReference type="InterPro" id="IPR001345">
    <property type="entry name" value="PG/BPGM_mutase_AS"/>
</dbReference>
<dbReference type="InterPro" id="IPR050275">
    <property type="entry name" value="PGM_Phosphatase"/>
</dbReference>
<dbReference type="InterPro" id="IPR023086">
    <property type="entry name" value="Phosphoglycerate_mutase_GpmB"/>
</dbReference>
<dbReference type="NCBIfam" id="NF002901">
    <property type="entry name" value="PRK03482.1"/>
    <property type="match status" value="1"/>
</dbReference>
<dbReference type="PANTHER" id="PTHR48100">
    <property type="entry name" value="BROAD-SPECIFICITY PHOSPHATASE YOR283W-RELATED"/>
    <property type="match status" value="1"/>
</dbReference>
<dbReference type="PANTHER" id="PTHR48100:SF1">
    <property type="entry name" value="HISTIDINE PHOSPHATASE FAMILY PROTEIN-RELATED"/>
    <property type="match status" value="1"/>
</dbReference>
<dbReference type="Pfam" id="PF00300">
    <property type="entry name" value="His_Phos_1"/>
    <property type="match status" value="1"/>
</dbReference>
<dbReference type="SMART" id="SM00855">
    <property type="entry name" value="PGAM"/>
    <property type="match status" value="1"/>
</dbReference>
<dbReference type="SUPFAM" id="SSF53254">
    <property type="entry name" value="Phosphoglycerate mutase-like"/>
    <property type="match status" value="1"/>
</dbReference>
<dbReference type="PROSITE" id="PS00175">
    <property type="entry name" value="PG_MUTASE"/>
    <property type="match status" value="1"/>
</dbReference>
<protein>
    <recommendedName>
        <fullName evidence="1">Probable phosphoglycerate mutase GpmB</fullName>
        <ecNumber evidence="1">5.4.2.-</ecNumber>
    </recommendedName>
    <alternativeName>
        <fullName evidence="1">PGAM</fullName>
    </alternativeName>
    <alternativeName>
        <fullName evidence="1">Phosphoglyceromutase</fullName>
    </alternativeName>
</protein>
<accession>Q1R246</accession>
<feature type="chain" id="PRO_1000064124" description="Probable phosphoglycerate mutase GpmB">
    <location>
        <begin position="1"/>
        <end position="215"/>
    </location>
</feature>
<feature type="active site" description="Tele-phosphohistidine intermediate" evidence="1">
    <location>
        <position position="9"/>
    </location>
</feature>
<feature type="active site" description="Proton donor/acceptor" evidence="1">
    <location>
        <position position="82"/>
    </location>
</feature>
<feature type="binding site" evidence="1">
    <location>
        <begin position="8"/>
        <end position="15"/>
    </location>
    <ligand>
        <name>substrate</name>
    </ligand>
</feature>
<feature type="binding site" evidence="1">
    <location>
        <begin position="21"/>
        <end position="22"/>
    </location>
    <ligand>
        <name>substrate</name>
    </ligand>
</feature>
<feature type="binding site" evidence="1">
    <location>
        <position position="58"/>
    </location>
    <ligand>
        <name>substrate</name>
    </ligand>
</feature>
<feature type="binding site" evidence="1">
    <location>
        <position position="60"/>
    </location>
    <ligand>
        <name>substrate</name>
    </ligand>
</feature>
<feature type="binding site" evidence="1">
    <location>
        <begin position="82"/>
        <end position="85"/>
    </location>
    <ligand>
        <name>substrate</name>
    </ligand>
</feature>
<feature type="binding site" evidence="1">
    <location>
        <begin position="104"/>
        <end position="105"/>
    </location>
    <ligand>
        <name>substrate</name>
    </ligand>
</feature>
<feature type="binding site" evidence="1">
    <location>
        <begin position="151"/>
        <end position="152"/>
    </location>
    <ligand>
        <name>substrate</name>
    </ligand>
</feature>
<feature type="site" description="Transition state stabilizer" evidence="1">
    <location>
        <position position="150"/>
    </location>
</feature>
<gene>
    <name evidence="1" type="primary">gpmB</name>
    <name type="ordered locus">UTI89_C5168</name>
</gene>
<keyword id="KW-0324">Glycolysis</keyword>
<keyword id="KW-0413">Isomerase</keyword>
<organism>
    <name type="scientific">Escherichia coli (strain UTI89 / UPEC)</name>
    <dbReference type="NCBI Taxonomy" id="364106"/>
    <lineage>
        <taxon>Bacteria</taxon>
        <taxon>Pseudomonadati</taxon>
        <taxon>Pseudomonadota</taxon>
        <taxon>Gammaproteobacteria</taxon>
        <taxon>Enterobacterales</taxon>
        <taxon>Enterobacteriaceae</taxon>
        <taxon>Escherichia</taxon>
    </lineage>
</organism>
<reference key="1">
    <citation type="journal article" date="2006" name="Proc. Natl. Acad. Sci. U.S.A.">
        <title>Identification of genes subject to positive selection in uropathogenic strains of Escherichia coli: a comparative genomics approach.</title>
        <authorList>
            <person name="Chen S.L."/>
            <person name="Hung C.-S."/>
            <person name="Xu J."/>
            <person name="Reigstad C.S."/>
            <person name="Magrini V."/>
            <person name="Sabo A."/>
            <person name="Blasiar D."/>
            <person name="Bieri T."/>
            <person name="Meyer R.R."/>
            <person name="Ozersky P."/>
            <person name="Armstrong J.R."/>
            <person name="Fulton R.S."/>
            <person name="Latreille J.P."/>
            <person name="Spieth J."/>
            <person name="Hooton T.M."/>
            <person name="Mardis E.R."/>
            <person name="Hultgren S.J."/>
            <person name="Gordon J.I."/>
        </authorList>
    </citation>
    <scope>NUCLEOTIDE SEQUENCE [LARGE SCALE GENOMIC DNA]</scope>
    <source>
        <strain>UTI89 / UPEC</strain>
    </source>
</reference>
<proteinExistence type="inferred from homology"/>